<dbReference type="EMBL" id="BA000023">
    <property type="protein sequence ID" value="BAB65383.1"/>
    <property type="molecule type" value="Genomic_DNA"/>
</dbReference>
<dbReference type="RefSeq" id="WP_010978366.1">
    <property type="nucleotide sequence ID" value="NC_003106.2"/>
</dbReference>
<dbReference type="SMR" id="Q975L7"/>
<dbReference type="STRING" id="273063.STK_04015"/>
<dbReference type="KEGG" id="sto:STK_04015"/>
<dbReference type="PATRIC" id="fig|273063.9.peg.462"/>
<dbReference type="eggNOG" id="arCOG04167">
    <property type="taxonomic scope" value="Archaea"/>
</dbReference>
<dbReference type="OrthoDB" id="63594at2157"/>
<dbReference type="Proteomes" id="UP000001015">
    <property type="component" value="Chromosome"/>
</dbReference>
<dbReference type="GO" id="GO:0022625">
    <property type="term" value="C:cytosolic large ribosomal subunit"/>
    <property type="evidence" value="ECO:0007669"/>
    <property type="project" value="TreeGrafter"/>
</dbReference>
<dbReference type="GO" id="GO:0003723">
    <property type="term" value="F:RNA binding"/>
    <property type="evidence" value="ECO:0007669"/>
    <property type="project" value="InterPro"/>
</dbReference>
<dbReference type="GO" id="GO:0003735">
    <property type="term" value="F:structural constituent of ribosome"/>
    <property type="evidence" value="ECO:0007669"/>
    <property type="project" value="InterPro"/>
</dbReference>
<dbReference type="GO" id="GO:0042273">
    <property type="term" value="P:ribosomal large subunit biogenesis"/>
    <property type="evidence" value="ECO:0007669"/>
    <property type="project" value="TreeGrafter"/>
</dbReference>
<dbReference type="GO" id="GO:0006412">
    <property type="term" value="P:translation"/>
    <property type="evidence" value="ECO:0007669"/>
    <property type="project" value="UniProtKB-UniRule"/>
</dbReference>
<dbReference type="CDD" id="cd23702">
    <property type="entry name" value="eL14"/>
    <property type="match status" value="1"/>
</dbReference>
<dbReference type="FunFam" id="2.30.30.30:FF:000045">
    <property type="entry name" value="50S ribosomal protein L14e"/>
    <property type="match status" value="1"/>
</dbReference>
<dbReference type="Gene3D" id="2.30.30.30">
    <property type="match status" value="1"/>
</dbReference>
<dbReference type="HAMAP" id="MF_00721">
    <property type="entry name" value="Ribosomal_eL14"/>
    <property type="match status" value="1"/>
</dbReference>
<dbReference type="InterPro" id="IPR005824">
    <property type="entry name" value="KOW"/>
</dbReference>
<dbReference type="InterPro" id="IPR014722">
    <property type="entry name" value="Rib_uL2_dom2"/>
</dbReference>
<dbReference type="InterPro" id="IPR039660">
    <property type="entry name" value="Ribosomal_eL14"/>
</dbReference>
<dbReference type="InterPro" id="IPR023651">
    <property type="entry name" value="Ribosomal_eL14_arc"/>
</dbReference>
<dbReference type="InterPro" id="IPR008991">
    <property type="entry name" value="Translation_prot_SH3-like_sf"/>
</dbReference>
<dbReference type="NCBIfam" id="NF003320">
    <property type="entry name" value="PRK04333.1"/>
    <property type="match status" value="1"/>
</dbReference>
<dbReference type="PANTHER" id="PTHR11127">
    <property type="entry name" value="60S RIBOSOMAL PROTEIN L14"/>
    <property type="match status" value="1"/>
</dbReference>
<dbReference type="PANTHER" id="PTHR11127:SF2">
    <property type="entry name" value="LARGE RIBOSOMAL SUBUNIT PROTEIN EL14"/>
    <property type="match status" value="1"/>
</dbReference>
<dbReference type="Pfam" id="PF00467">
    <property type="entry name" value="KOW"/>
    <property type="match status" value="1"/>
</dbReference>
<dbReference type="SUPFAM" id="SSF50104">
    <property type="entry name" value="Translation proteins SH3-like domain"/>
    <property type="match status" value="1"/>
</dbReference>
<name>RL14E_SULTO</name>
<keyword id="KW-1185">Reference proteome</keyword>
<keyword id="KW-0687">Ribonucleoprotein</keyword>
<keyword id="KW-0689">Ribosomal protein</keyword>
<evidence type="ECO:0000255" key="1">
    <source>
        <dbReference type="HAMAP-Rule" id="MF_00721"/>
    </source>
</evidence>
<evidence type="ECO:0000305" key="2"/>
<sequence length="96" mass="10833">MPAIEIGRICVKTRGREAGKKCVIVDIIDENFVLVTGPKDVNKVKRRRVNILHLEPTDKKIDINKGASDDEVKKKLEEAGLIEFMKQDVKPKIPVI</sequence>
<comment type="similarity">
    <text evidence="1">Belongs to the eukaryotic ribosomal protein eL14 family.</text>
</comment>
<proteinExistence type="inferred from homology"/>
<feature type="chain" id="PRO_0000132057" description="Large ribosomal subunit protein eL14">
    <location>
        <begin position="1"/>
        <end position="96"/>
    </location>
</feature>
<accession>Q975L7</accession>
<organism>
    <name type="scientific">Sulfurisphaera tokodaii (strain DSM 16993 / JCM 10545 / NBRC 100140 / 7)</name>
    <name type="common">Sulfolobus tokodaii</name>
    <dbReference type="NCBI Taxonomy" id="273063"/>
    <lineage>
        <taxon>Archaea</taxon>
        <taxon>Thermoproteota</taxon>
        <taxon>Thermoprotei</taxon>
        <taxon>Sulfolobales</taxon>
        <taxon>Sulfolobaceae</taxon>
        <taxon>Sulfurisphaera</taxon>
    </lineage>
</organism>
<protein>
    <recommendedName>
        <fullName evidence="1">Large ribosomal subunit protein eL14</fullName>
    </recommendedName>
    <alternativeName>
        <fullName evidence="2">50S ribosomal protein L14e</fullName>
    </alternativeName>
</protein>
<reference key="1">
    <citation type="journal article" date="2001" name="DNA Res.">
        <title>Complete genome sequence of an aerobic thermoacidophilic Crenarchaeon, Sulfolobus tokodaii strain7.</title>
        <authorList>
            <person name="Kawarabayasi Y."/>
            <person name="Hino Y."/>
            <person name="Horikawa H."/>
            <person name="Jin-no K."/>
            <person name="Takahashi M."/>
            <person name="Sekine M."/>
            <person name="Baba S."/>
            <person name="Ankai A."/>
            <person name="Kosugi H."/>
            <person name="Hosoyama A."/>
            <person name="Fukui S."/>
            <person name="Nagai Y."/>
            <person name="Nishijima K."/>
            <person name="Otsuka R."/>
            <person name="Nakazawa H."/>
            <person name="Takamiya M."/>
            <person name="Kato Y."/>
            <person name="Yoshizawa T."/>
            <person name="Tanaka T."/>
            <person name="Kudoh Y."/>
            <person name="Yamazaki J."/>
            <person name="Kushida N."/>
            <person name="Oguchi A."/>
            <person name="Aoki K."/>
            <person name="Masuda S."/>
            <person name="Yanagii M."/>
            <person name="Nishimura M."/>
            <person name="Yamagishi A."/>
            <person name="Oshima T."/>
            <person name="Kikuchi H."/>
        </authorList>
    </citation>
    <scope>NUCLEOTIDE SEQUENCE [LARGE SCALE GENOMIC DNA]</scope>
    <source>
        <strain>DSM 16993 / JCM 10545 / NBRC 100140 / 7</strain>
    </source>
</reference>
<gene>
    <name evidence="1" type="primary">rpl14e</name>
    <name type="ordered locus">STK_04015</name>
    <name type="ORF">STS054</name>
</gene>